<reference key="1">
    <citation type="journal article" date="1995" name="Science">
        <title>Whole-genome random sequencing and assembly of Haemophilus influenzae Rd.</title>
        <authorList>
            <person name="Fleischmann R.D."/>
            <person name="Adams M.D."/>
            <person name="White O."/>
            <person name="Clayton R.A."/>
            <person name="Kirkness E.F."/>
            <person name="Kerlavage A.R."/>
            <person name="Bult C.J."/>
            <person name="Tomb J.-F."/>
            <person name="Dougherty B.A."/>
            <person name="Merrick J.M."/>
            <person name="McKenney K."/>
            <person name="Sutton G.G."/>
            <person name="FitzHugh W."/>
            <person name="Fields C.A."/>
            <person name="Gocayne J.D."/>
            <person name="Scott J.D."/>
            <person name="Shirley R."/>
            <person name="Liu L.-I."/>
            <person name="Glodek A."/>
            <person name="Kelley J.M."/>
            <person name="Weidman J.F."/>
            <person name="Phillips C.A."/>
            <person name="Spriggs T."/>
            <person name="Hedblom E."/>
            <person name="Cotton M.D."/>
            <person name="Utterback T.R."/>
            <person name="Hanna M.C."/>
            <person name="Nguyen D.T."/>
            <person name="Saudek D.M."/>
            <person name="Brandon R.C."/>
            <person name="Fine L.D."/>
            <person name="Fritchman J.L."/>
            <person name="Fuhrmann J.L."/>
            <person name="Geoghagen N.S.M."/>
            <person name="Gnehm C.L."/>
            <person name="McDonald L.A."/>
            <person name="Small K.V."/>
            <person name="Fraser C.M."/>
            <person name="Smith H.O."/>
            <person name="Venter J.C."/>
        </authorList>
    </citation>
    <scope>NUCLEOTIDE SEQUENCE [LARGE SCALE GENOMIC DNA]</scope>
    <source>
        <strain>ATCC 51907 / DSM 11121 / KW20 / Rd</strain>
    </source>
</reference>
<accession>P45295</accession>
<organism>
    <name type="scientific">Haemophilus influenzae (strain ATCC 51907 / DSM 11121 / KW20 / Rd)</name>
    <dbReference type="NCBI Taxonomy" id="71421"/>
    <lineage>
        <taxon>Bacteria</taxon>
        <taxon>Pseudomonadati</taxon>
        <taxon>Pseudomonadota</taxon>
        <taxon>Gammaproteobacteria</taxon>
        <taxon>Pasteurellales</taxon>
        <taxon>Pasteurellaceae</taxon>
        <taxon>Haemophilus</taxon>
    </lineage>
</organism>
<name>DLD_HAEIN</name>
<sequence>MSVQQLISRLTDIVGSRYIITDPTKTEAYRSGYRFGTGNALAVVRPATLLEFWNIVKVCVEHDVIVINQAANTGLTGGSTPDGNDYDRDIVVINTMRIDGIQLINNASQVICLPGSTLNELENQLKPFGREPHSVIGSSCIGASVIGGICNNSGGALVQRGPAYTEMALYAQLNEKGELELKNHLGIDLGETPEEILTNLQEKRYQVKDIRQDCGHGHDHYYCNYVRQVDEGSPARFNADPARHYEASGCAGKLAVFAVRLDTFPLEKETAVFYIGTNQTSVLSDIRRHMLVNFEVLPISGEYIHRDAFDIAAKYGKDTFWVIKKFGTHWLPKLFSLKSNVDRIGKKFFFLPQHLSDKFMQTVSKFIPEHLPQSLWDYRNKYEHHLIIKMGGKGIQEAREYLESYIADGSKGGYFECNAIETQAAMLHRFAVASAAIRYRAIHEKEVEEIVALDVALRRNDQDWFEVLPPEIDNRIISKLYYGHFMCHVFHQDYIVKKGYDYEELEYEMLKLLDKRGAQYPAEHNVGHLYEAKPTLRKFYKELDPTNSFNPGIGKTTRKKYWAE</sequence>
<keyword id="KW-0997">Cell inner membrane</keyword>
<keyword id="KW-1003">Cell membrane</keyword>
<keyword id="KW-0274">FAD</keyword>
<keyword id="KW-0285">Flavoprotein</keyword>
<keyword id="KW-0472">Membrane</keyword>
<keyword id="KW-0560">Oxidoreductase</keyword>
<keyword id="KW-0874">Quinone</keyword>
<keyword id="KW-1185">Reference proteome</keyword>
<evidence type="ECO:0000255" key="1">
    <source>
        <dbReference type="HAMAP-Rule" id="MF_02092"/>
    </source>
</evidence>
<protein>
    <recommendedName>
        <fullName evidence="1">Quinone-dependent D-lactate dehydrogenase</fullName>
        <ecNumber evidence="1">1.1.5.12</ecNumber>
    </recommendedName>
    <alternativeName>
        <fullName evidence="1">D-lactate dehydrogenase</fullName>
        <shortName evidence="1">D-LDH</shortName>
    </alternativeName>
</protein>
<gene>
    <name evidence="1" type="primary">dld</name>
    <name type="ordered locus">HI_1649</name>
</gene>
<proteinExistence type="inferred from homology"/>
<dbReference type="EC" id="1.1.5.12" evidence="1"/>
<dbReference type="EMBL" id="L42023">
    <property type="protein sequence ID" value="AAC23296.1"/>
    <property type="molecule type" value="Genomic_DNA"/>
</dbReference>
<dbReference type="PIR" id="I64134">
    <property type="entry name" value="I64134"/>
</dbReference>
<dbReference type="RefSeq" id="NP_439791.1">
    <property type="nucleotide sequence ID" value="NC_000907.1"/>
</dbReference>
<dbReference type="SMR" id="P45295"/>
<dbReference type="STRING" id="71421.HI_1649"/>
<dbReference type="EnsemblBacteria" id="AAC23296">
    <property type="protein sequence ID" value="AAC23296"/>
    <property type="gene ID" value="HI_1649"/>
</dbReference>
<dbReference type="KEGG" id="hin:HI_1649"/>
<dbReference type="PATRIC" id="fig|71421.8.peg.1725"/>
<dbReference type="eggNOG" id="COG0277">
    <property type="taxonomic scope" value="Bacteria"/>
</dbReference>
<dbReference type="HOGENOM" id="CLU_034094_0_0_6"/>
<dbReference type="OrthoDB" id="9772552at2"/>
<dbReference type="PhylomeDB" id="P45295"/>
<dbReference type="BioCyc" id="HINF71421:G1GJ1-1666-MONOMER"/>
<dbReference type="Proteomes" id="UP000000579">
    <property type="component" value="Chromosome"/>
</dbReference>
<dbReference type="GO" id="GO:0031234">
    <property type="term" value="C:extrinsic component of cytoplasmic side of plasma membrane"/>
    <property type="evidence" value="ECO:0007669"/>
    <property type="project" value="UniProtKB-UniRule"/>
</dbReference>
<dbReference type="GO" id="GO:0004458">
    <property type="term" value="F:D-lactate dehydrogenase (cytochrome) activity"/>
    <property type="evidence" value="ECO:0007669"/>
    <property type="project" value="UniProtKB-UniRule"/>
</dbReference>
<dbReference type="GO" id="GO:0102029">
    <property type="term" value="F:D-lactate dehydrogenase (quinone) activity"/>
    <property type="evidence" value="ECO:0007669"/>
    <property type="project" value="UniProtKB-EC"/>
</dbReference>
<dbReference type="GO" id="GO:0071949">
    <property type="term" value="F:FAD binding"/>
    <property type="evidence" value="ECO:0007669"/>
    <property type="project" value="InterPro"/>
</dbReference>
<dbReference type="GO" id="GO:0048038">
    <property type="term" value="F:quinone binding"/>
    <property type="evidence" value="ECO:0007669"/>
    <property type="project" value="UniProtKB-KW"/>
</dbReference>
<dbReference type="GO" id="GO:0006089">
    <property type="term" value="P:lactate metabolic process"/>
    <property type="evidence" value="ECO:0007669"/>
    <property type="project" value="UniProtKB-UniRule"/>
</dbReference>
<dbReference type="GO" id="GO:0022904">
    <property type="term" value="P:respiratory electron transport chain"/>
    <property type="evidence" value="ECO:0000318"/>
    <property type="project" value="GO_Central"/>
</dbReference>
<dbReference type="GO" id="GO:0055085">
    <property type="term" value="P:transmembrane transport"/>
    <property type="evidence" value="ECO:0007669"/>
    <property type="project" value="InterPro"/>
</dbReference>
<dbReference type="FunFam" id="3.30.43.10:FF:000005">
    <property type="entry name" value="Quinone-dependent D-lactate dehydrogenase"/>
    <property type="match status" value="1"/>
</dbReference>
<dbReference type="Gene3D" id="3.30.465.10">
    <property type="match status" value="1"/>
</dbReference>
<dbReference type="Gene3D" id="3.30.70.610">
    <property type="entry name" value="D-lactate dehydrogenase, cap domain, subdomain 1"/>
    <property type="match status" value="2"/>
</dbReference>
<dbReference type="Gene3D" id="3.30.1370.20">
    <property type="entry name" value="D-lactate dehydrogenase, cap domain, subdomain 2"/>
    <property type="match status" value="1"/>
</dbReference>
<dbReference type="Gene3D" id="3.30.43.10">
    <property type="entry name" value="Uridine Diphospho-n-acetylenolpyruvylglucosamine Reductase, domain 2"/>
    <property type="match status" value="1"/>
</dbReference>
<dbReference type="HAMAP" id="MF_02092">
    <property type="entry name" value="DLDH_Dld"/>
    <property type="match status" value="1"/>
</dbReference>
<dbReference type="InterPro" id="IPR016172">
    <property type="entry name" value="D-lactate_DH_C-sub1"/>
</dbReference>
<dbReference type="InterPro" id="IPR016173">
    <property type="entry name" value="D-lactate_DH_C-sub2"/>
</dbReference>
<dbReference type="InterPro" id="IPR012256">
    <property type="entry name" value="D_lactate_DH"/>
</dbReference>
<dbReference type="InterPro" id="IPR016166">
    <property type="entry name" value="FAD-bd_PCMH"/>
</dbReference>
<dbReference type="InterPro" id="IPR036318">
    <property type="entry name" value="FAD-bd_PCMH-like_sf"/>
</dbReference>
<dbReference type="InterPro" id="IPR016167">
    <property type="entry name" value="FAD-bd_PCMH_sub1"/>
</dbReference>
<dbReference type="InterPro" id="IPR016169">
    <property type="entry name" value="FAD-bd_PCMH_sub2"/>
</dbReference>
<dbReference type="InterPro" id="IPR016164">
    <property type="entry name" value="FAD-linked_Oxase-like_C"/>
</dbReference>
<dbReference type="InterPro" id="IPR051264">
    <property type="entry name" value="FAD-oxidored/transferase_4"/>
</dbReference>
<dbReference type="InterPro" id="IPR015409">
    <property type="entry name" value="Lactate_DH_C"/>
</dbReference>
<dbReference type="InterPro" id="IPR006094">
    <property type="entry name" value="Oxid_FAD_bind_N"/>
</dbReference>
<dbReference type="NCBIfam" id="NF008387">
    <property type="entry name" value="PRK11183.1"/>
    <property type="match status" value="1"/>
</dbReference>
<dbReference type="PANTHER" id="PTHR43716">
    <property type="entry name" value="D-2-HYDROXYGLUTARATE DEHYDROGENASE, MITOCHONDRIAL"/>
    <property type="match status" value="1"/>
</dbReference>
<dbReference type="PANTHER" id="PTHR43716:SF1">
    <property type="entry name" value="D-2-HYDROXYGLUTARATE DEHYDROGENASE, MITOCHONDRIAL"/>
    <property type="match status" value="1"/>
</dbReference>
<dbReference type="Pfam" id="PF01565">
    <property type="entry name" value="FAD_binding_4"/>
    <property type="match status" value="1"/>
</dbReference>
<dbReference type="Pfam" id="PF09330">
    <property type="entry name" value="Lact-deh-memb"/>
    <property type="match status" value="1"/>
</dbReference>
<dbReference type="PIRSF" id="PIRSF000101">
    <property type="entry name" value="D-lactate_dh"/>
    <property type="match status" value="1"/>
</dbReference>
<dbReference type="SUPFAM" id="SSF56176">
    <property type="entry name" value="FAD-binding/transporter-associated domain-like"/>
    <property type="match status" value="1"/>
</dbReference>
<dbReference type="SUPFAM" id="SSF55103">
    <property type="entry name" value="FAD-linked oxidases, C-terminal domain"/>
    <property type="match status" value="1"/>
</dbReference>
<dbReference type="PROSITE" id="PS51387">
    <property type="entry name" value="FAD_PCMH"/>
    <property type="match status" value="1"/>
</dbReference>
<comment type="function">
    <text evidence="1">Catalyzes the oxidation of D-lactate to pyruvate.</text>
</comment>
<comment type="catalytic activity">
    <reaction evidence="1">
        <text>(R)-lactate + a quinone = a quinol + pyruvate</text>
        <dbReference type="Rhea" id="RHEA:51468"/>
        <dbReference type="ChEBI" id="CHEBI:15361"/>
        <dbReference type="ChEBI" id="CHEBI:16004"/>
        <dbReference type="ChEBI" id="CHEBI:24646"/>
        <dbReference type="ChEBI" id="CHEBI:132124"/>
        <dbReference type="EC" id="1.1.5.12"/>
    </reaction>
</comment>
<comment type="cofactor">
    <cofactor evidence="1">
        <name>FAD</name>
        <dbReference type="ChEBI" id="CHEBI:57692"/>
    </cofactor>
</comment>
<comment type="subcellular location">
    <subcellularLocation>
        <location evidence="1">Cell inner membrane</location>
        <topology evidence="1">Peripheral membrane protein</topology>
        <orientation evidence="1">Cytoplasmic side</orientation>
    </subcellularLocation>
</comment>
<comment type="similarity">
    <text evidence="1">Belongs to the quinone-dependent D-lactate dehydrogenase family.</text>
</comment>
<feature type="chain" id="PRO_0000084389" description="Quinone-dependent D-lactate dehydrogenase">
    <location>
        <begin position="1"/>
        <end position="564"/>
    </location>
</feature>
<feature type="domain" description="FAD-binding PCMH-type" evidence="1">
    <location>
        <begin position="36"/>
        <end position="207"/>
    </location>
</feature>
<feature type="binding site" evidence="1">
    <location>
        <begin position="70"/>
        <end position="74"/>
    </location>
    <ligand>
        <name>FAD</name>
        <dbReference type="ChEBI" id="CHEBI:57692"/>
    </ligand>
</feature>
<feature type="binding site" evidence="1">
    <location>
        <begin position="78"/>
        <end position="79"/>
    </location>
    <ligand>
        <name>FAD</name>
        <dbReference type="ChEBI" id="CHEBI:57692"/>
    </ligand>
</feature>
<feature type="binding site" evidence="1">
    <location>
        <position position="137"/>
    </location>
    <ligand>
        <name>FAD</name>
        <dbReference type="ChEBI" id="CHEBI:57692"/>
    </ligand>
</feature>
<feature type="binding site" evidence="1">
    <location>
        <position position="144"/>
    </location>
    <ligand>
        <name>FAD</name>
        <dbReference type="ChEBI" id="CHEBI:57692"/>
    </ligand>
</feature>
<feature type="binding site" evidence="1">
    <location>
        <position position="154"/>
    </location>
    <ligand>
        <name>FAD</name>
        <dbReference type="ChEBI" id="CHEBI:57692"/>
    </ligand>
</feature>
<feature type="binding site" evidence="1">
    <location>
        <position position="256"/>
    </location>
    <ligand>
        <name>FAD</name>
        <dbReference type="ChEBI" id="CHEBI:57692"/>
    </ligand>
</feature>